<comment type="function">
    <text evidence="3 4 7">Toxic component of a type I toxin-antitoxin (TA) system (Probable). When overexpressed kills cells within minutes; causes collapse of the transmembrane potential and arrest of respiration (PubMed:10361310). Expression leads to membrane depolarization; when protein levels are high enough depolarization probably leads to lowered metabolic activity which in turn induces some cells to enter the persistent state in which they transiently survive antibiotic exposure. Its toxic effect is probably neutralized by antisense antitoxin RNA SokB, which is encoded in trans on the opposite DNA strand (PubMed:10361310).</text>
</comment>
<comment type="subcellular location">
    <subcellularLocation>
        <location evidence="1 8">Cell inner membrane</location>
        <topology evidence="1">Single-pass membrane protein</topology>
    </subcellularLocation>
</comment>
<comment type="induction">
    <text evidence="4">Induced by GTPase Obg expression, which requires alarmone (p)ppGpp.</text>
</comment>
<comment type="disruption phenotype">
    <text evidence="4">Partial loss of Obg-controlled persistence.</text>
</comment>
<comment type="similarity">
    <text evidence="6">Belongs to the Hok/Gef family.</text>
</comment>
<organism>
    <name type="scientific">Escherichia coli (strain K12)</name>
    <dbReference type="NCBI Taxonomy" id="83333"/>
    <lineage>
        <taxon>Bacteria</taxon>
        <taxon>Pseudomonadati</taxon>
        <taxon>Pseudomonadota</taxon>
        <taxon>Gammaproteobacteria</taxon>
        <taxon>Enterobacterales</taxon>
        <taxon>Enterobacteriaceae</taxon>
        <taxon>Escherichia</taxon>
    </lineage>
</organism>
<accession>P77494</accession>
<name>HOKB_ECOLI</name>
<gene>
    <name evidence="5" type="primary">hokB</name>
    <name type="synonym">ydcB</name>
    <name type="ordered locus">b4428</name>
    <name type="ordered locus">JW5225</name>
</gene>
<evidence type="ECO:0000250" key="1">
    <source>
        <dbReference type="UniProtKB" id="P0ACG4"/>
    </source>
</evidence>
<evidence type="ECO:0000255" key="2"/>
<evidence type="ECO:0000269" key="3">
    <source>
    </source>
</evidence>
<evidence type="ECO:0000269" key="4">
    <source>
    </source>
</evidence>
<evidence type="ECO:0000303" key="5">
    <source>
    </source>
</evidence>
<evidence type="ECO:0000305" key="6"/>
<evidence type="ECO:0000305" key="7">
    <source>
    </source>
</evidence>
<evidence type="ECO:0000305" key="8">
    <source>
    </source>
</evidence>
<dbReference type="EMBL" id="U00096">
    <property type="protein sequence ID" value="AAT48130.1"/>
    <property type="molecule type" value="Genomic_DNA"/>
</dbReference>
<dbReference type="EMBL" id="AP009048">
    <property type="protein sequence ID" value="BAA15042.2"/>
    <property type="molecule type" value="Genomic_DNA"/>
</dbReference>
<dbReference type="RefSeq" id="WP_001320773.1">
    <property type="nucleotide sequence ID" value="NZ_SSZK01000021.1"/>
</dbReference>
<dbReference type="RefSeq" id="YP_025301.1">
    <property type="nucleotide sequence ID" value="NC_000913.3"/>
</dbReference>
<dbReference type="SMR" id="P77494"/>
<dbReference type="BioGRID" id="4262884">
    <property type="interactions" value="12"/>
</dbReference>
<dbReference type="FunCoup" id="P77494">
    <property type="interactions" value="1"/>
</dbReference>
<dbReference type="STRING" id="511145.b4428"/>
<dbReference type="TCDB" id="1.E.53.1.3">
    <property type="family name" value="the toxic hok/gef protein (hok/gef) family"/>
</dbReference>
<dbReference type="PaxDb" id="511145-b4428"/>
<dbReference type="EnsemblBacteria" id="AAT48130">
    <property type="protein sequence ID" value="AAT48130"/>
    <property type="gene ID" value="b4428"/>
</dbReference>
<dbReference type="GeneID" id="2847727"/>
<dbReference type="GeneID" id="75203500"/>
<dbReference type="KEGG" id="ecj:JW5225"/>
<dbReference type="KEGG" id="eco:b4428"/>
<dbReference type="KEGG" id="ecoc:C3026_08270"/>
<dbReference type="EchoBASE" id="EB1222"/>
<dbReference type="eggNOG" id="ENOG50339QC">
    <property type="taxonomic scope" value="Bacteria"/>
</dbReference>
<dbReference type="HOGENOM" id="CLU_177638_2_1_6"/>
<dbReference type="InParanoid" id="P77494"/>
<dbReference type="BioCyc" id="EcoCyc:MONOMER0-1604"/>
<dbReference type="PRO" id="PR:P77494"/>
<dbReference type="Proteomes" id="UP000000625">
    <property type="component" value="Chromosome"/>
</dbReference>
<dbReference type="GO" id="GO:0005886">
    <property type="term" value="C:plasma membrane"/>
    <property type="evidence" value="ECO:0000314"/>
    <property type="project" value="EcoCyc"/>
</dbReference>
<dbReference type="GO" id="GO:0022611">
    <property type="term" value="P:dormancy process"/>
    <property type="evidence" value="ECO:0000314"/>
    <property type="project" value="UniProtKB"/>
</dbReference>
<dbReference type="InterPro" id="IPR000021">
    <property type="entry name" value="Hok/gef_toxin"/>
</dbReference>
<dbReference type="InterPro" id="IPR018084">
    <property type="entry name" value="Hok/gef_toxin_CS"/>
</dbReference>
<dbReference type="NCBIfam" id="NF007279">
    <property type="entry name" value="PRK09738.1"/>
    <property type="match status" value="1"/>
</dbReference>
<dbReference type="Pfam" id="PF01848">
    <property type="entry name" value="HOK_GEF"/>
    <property type="match status" value="1"/>
</dbReference>
<dbReference type="PRINTS" id="PR00281">
    <property type="entry name" value="HOKGEFTOXIC"/>
</dbReference>
<dbReference type="PROSITE" id="PS00556">
    <property type="entry name" value="HOK_GEF"/>
    <property type="match status" value="1"/>
</dbReference>
<keyword id="KW-0997">Cell inner membrane</keyword>
<keyword id="KW-1003">Cell membrane</keyword>
<keyword id="KW-0472">Membrane</keyword>
<keyword id="KW-1185">Reference proteome</keyword>
<keyword id="KW-1277">Toxin-antitoxin system</keyword>
<keyword id="KW-0812">Transmembrane</keyword>
<keyword id="KW-1133">Transmembrane helix</keyword>
<reference key="1">
    <citation type="journal article" date="1996" name="DNA Res.">
        <title>A 570-kb DNA sequence of the Escherichia coli K-12 genome corresponding to the 28.0-40.1 min region on the linkage map.</title>
        <authorList>
            <person name="Aiba H."/>
            <person name="Baba T."/>
            <person name="Fujita K."/>
            <person name="Hayashi K."/>
            <person name="Inada T."/>
            <person name="Isono K."/>
            <person name="Itoh T."/>
            <person name="Kasai H."/>
            <person name="Kashimoto K."/>
            <person name="Kimura S."/>
            <person name="Kitakawa M."/>
            <person name="Kitagawa M."/>
            <person name="Makino K."/>
            <person name="Miki T."/>
            <person name="Mizobuchi K."/>
            <person name="Mori H."/>
            <person name="Mori T."/>
            <person name="Motomura K."/>
            <person name="Nakade S."/>
            <person name="Nakamura Y."/>
            <person name="Nashimoto H."/>
            <person name="Nishio Y."/>
            <person name="Oshima T."/>
            <person name="Saito N."/>
            <person name="Sampei G."/>
            <person name="Seki Y."/>
            <person name="Sivasundaram S."/>
            <person name="Tagami H."/>
            <person name="Takeda J."/>
            <person name="Takemoto K."/>
            <person name="Takeuchi Y."/>
            <person name="Wada C."/>
            <person name="Yamamoto Y."/>
            <person name="Horiuchi T."/>
        </authorList>
    </citation>
    <scope>NUCLEOTIDE SEQUENCE [LARGE SCALE GENOMIC DNA]</scope>
    <source>
        <strain>K12 / W3110 / ATCC 27325 / DSM 5911</strain>
    </source>
</reference>
<reference key="2">
    <citation type="journal article" date="1997" name="Science">
        <title>The complete genome sequence of Escherichia coli K-12.</title>
        <authorList>
            <person name="Blattner F.R."/>
            <person name="Plunkett G. III"/>
            <person name="Bloch C.A."/>
            <person name="Perna N.T."/>
            <person name="Burland V."/>
            <person name="Riley M."/>
            <person name="Collado-Vides J."/>
            <person name="Glasner J.D."/>
            <person name="Rode C.K."/>
            <person name="Mayhew G.F."/>
            <person name="Gregor J."/>
            <person name="Davis N.W."/>
            <person name="Kirkpatrick H.A."/>
            <person name="Goeden M.A."/>
            <person name="Rose D.J."/>
            <person name="Mau B."/>
            <person name="Shao Y."/>
        </authorList>
    </citation>
    <scope>NUCLEOTIDE SEQUENCE [LARGE SCALE GENOMIC DNA]</scope>
    <source>
        <strain>K12 / MG1655 / ATCC 47076</strain>
    </source>
</reference>
<reference key="3">
    <citation type="journal article" date="2006" name="Mol. Syst. Biol.">
        <title>Highly accurate genome sequences of Escherichia coli K-12 strains MG1655 and W3110.</title>
        <authorList>
            <person name="Hayashi K."/>
            <person name="Morooka N."/>
            <person name="Yamamoto Y."/>
            <person name="Fujita K."/>
            <person name="Isono K."/>
            <person name="Choi S."/>
            <person name="Ohtsubo E."/>
            <person name="Baba T."/>
            <person name="Wanner B.L."/>
            <person name="Mori H."/>
            <person name="Horiuchi T."/>
        </authorList>
    </citation>
    <scope>NUCLEOTIDE SEQUENCE [LARGE SCALE GENOMIC DNA]</scope>
    <source>
        <strain>K12 / W3110 / ATCC 27325 / DSM 5911</strain>
    </source>
</reference>
<reference key="4">
    <citation type="journal article" date="1999" name="Mol. Microbiol.">
        <title>Multiple hok genes on the chromosome of Escherichia coli.</title>
        <authorList>
            <person name="Pedersen K."/>
            <person name="Gerdes K."/>
        </authorList>
    </citation>
    <scope>FUNCTION</scope>
    <source>
        <strain>K12 / MG1655 / ATCC 47076</strain>
    </source>
</reference>
<reference key="5">
    <citation type="journal article" date="2015" name="Mol. Cell">
        <title>Obg and membrane depolarization are part of a microbial bet-hedging strategy that leads to antibiotic tolerance.</title>
        <authorList>
            <person name="Verstraeten N."/>
            <person name="Knapen W.J."/>
            <person name="Kint C.I."/>
            <person name="Liebens V."/>
            <person name="Van den Bergh B."/>
            <person name="Dewachter L."/>
            <person name="Michiels J.E."/>
            <person name="Fu Q."/>
            <person name="David C.C."/>
            <person name="Fierro A.C."/>
            <person name="Marchal K."/>
            <person name="Beirlant J."/>
            <person name="Versees W."/>
            <person name="Hofkens J."/>
            <person name="Jansen M."/>
            <person name="Fauvart M."/>
            <person name="Michiels J."/>
        </authorList>
    </citation>
    <scope>FUNCTION IN PERSISTENCE</scope>
    <scope>INDUCTION</scope>
    <scope>DISRUPTION PHENOTYPE</scope>
    <source>
        <strain>K12 / BW25113</strain>
        <strain>TOP10</strain>
    </source>
</reference>
<sequence length="49" mass="5626">MKHNPLVVCLLIICITILTFTLLTRQTLYELRFRDGDKEVAALMACTSR</sequence>
<proteinExistence type="evidence at protein level"/>
<protein>
    <recommendedName>
        <fullName evidence="6">Toxic protein HokB</fullName>
    </recommendedName>
</protein>
<feature type="chain" id="PRO_0000199030" description="Toxic protein HokB">
    <location>
        <begin position="1"/>
        <end position="49"/>
    </location>
</feature>
<feature type="transmembrane region" description="Helical" evidence="2">
    <location>
        <begin position="4"/>
        <end position="24"/>
    </location>
</feature>